<sequence length="270" mass="29020">MRLTVVGANGKMGRELITAIQRREDVELCAVLVRKGSPFVDKDASILTGSDFLNIRITDDPENAFSNTEGILDFSQPQASILYANYAAQKSLVHIIGTTGFSKTEEEKIADFAKDTTIVKSGNMSLGVNLLASLVKKAAKALEVDDFDIEIYEMHHSGKVDAPSGTALLLGQAAAEGRNVMLKNVSVNARNGYTGEREKGTIGFACSRGGTVVGDHSITFAGPNERIVLSHVAQDRSIFANGALKAALWAKNHENGLYSMLDVLGLKDEF</sequence>
<reference key="1">
    <citation type="journal article" date="2004" name="Proc. Natl. Acad. Sci. U.S.A.">
        <title>The louse-borne human pathogen Bartonella quintana is a genomic derivative of the zoonotic agent Bartonella henselae.</title>
        <authorList>
            <person name="Alsmark U.C.M."/>
            <person name="Frank A.C."/>
            <person name="Karlberg E.O."/>
            <person name="Legault B.-A."/>
            <person name="Ardell D.H."/>
            <person name="Canbaeck B."/>
            <person name="Eriksson A.-S."/>
            <person name="Naeslund A.K."/>
            <person name="Handley S.A."/>
            <person name="Huvet M."/>
            <person name="La Scola B."/>
            <person name="Holmberg M."/>
            <person name="Andersson S.G.E."/>
        </authorList>
    </citation>
    <scope>NUCLEOTIDE SEQUENCE [LARGE SCALE GENOMIC DNA]</scope>
    <source>
        <strain>Toulouse</strain>
    </source>
</reference>
<keyword id="KW-0028">Amino-acid biosynthesis</keyword>
<keyword id="KW-0963">Cytoplasm</keyword>
<keyword id="KW-0220">Diaminopimelate biosynthesis</keyword>
<keyword id="KW-0457">Lysine biosynthesis</keyword>
<keyword id="KW-0520">NAD</keyword>
<keyword id="KW-0521">NADP</keyword>
<keyword id="KW-0560">Oxidoreductase</keyword>
<protein>
    <recommendedName>
        <fullName evidence="1">4-hydroxy-tetrahydrodipicolinate reductase</fullName>
        <shortName evidence="1">HTPA reductase</shortName>
        <ecNumber evidence="1">1.17.1.8</ecNumber>
    </recommendedName>
</protein>
<organism>
    <name type="scientific">Bartonella quintana (strain Toulouse)</name>
    <name type="common">Rochalimaea quintana</name>
    <dbReference type="NCBI Taxonomy" id="283165"/>
    <lineage>
        <taxon>Bacteria</taxon>
        <taxon>Pseudomonadati</taxon>
        <taxon>Pseudomonadota</taxon>
        <taxon>Alphaproteobacteria</taxon>
        <taxon>Hyphomicrobiales</taxon>
        <taxon>Bartonellaceae</taxon>
        <taxon>Bartonella</taxon>
    </lineage>
</organism>
<gene>
    <name evidence="1" type="primary">dapB</name>
    <name type="ordered locus">BQ09810</name>
</gene>
<feature type="chain" id="PRO_0000228327" description="4-hydroxy-tetrahydrodipicolinate reductase">
    <location>
        <begin position="1"/>
        <end position="270"/>
    </location>
</feature>
<feature type="active site" description="Proton donor/acceptor" evidence="1">
    <location>
        <position position="155"/>
    </location>
</feature>
<feature type="active site" description="Proton donor" evidence="1">
    <location>
        <position position="159"/>
    </location>
</feature>
<feature type="binding site" evidence="1">
    <location>
        <begin position="7"/>
        <end position="12"/>
    </location>
    <ligand>
        <name>NAD(+)</name>
        <dbReference type="ChEBI" id="CHEBI:57540"/>
    </ligand>
</feature>
<feature type="binding site" evidence="1">
    <location>
        <position position="34"/>
    </location>
    <ligand>
        <name>NADP(+)</name>
        <dbReference type="ChEBI" id="CHEBI:58349"/>
    </ligand>
</feature>
<feature type="binding site" evidence="1">
    <location>
        <begin position="97"/>
        <end position="99"/>
    </location>
    <ligand>
        <name>NAD(+)</name>
        <dbReference type="ChEBI" id="CHEBI:57540"/>
    </ligand>
</feature>
<feature type="binding site" evidence="1">
    <location>
        <begin position="121"/>
        <end position="124"/>
    </location>
    <ligand>
        <name>NAD(+)</name>
        <dbReference type="ChEBI" id="CHEBI:57540"/>
    </ligand>
</feature>
<feature type="binding site" evidence="1">
    <location>
        <position position="156"/>
    </location>
    <ligand>
        <name>(S)-2,3,4,5-tetrahydrodipicolinate</name>
        <dbReference type="ChEBI" id="CHEBI:16845"/>
    </ligand>
</feature>
<feature type="binding site" evidence="1">
    <location>
        <begin position="165"/>
        <end position="166"/>
    </location>
    <ligand>
        <name>(S)-2,3,4,5-tetrahydrodipicolinate</name>
        <dbReference type="ChEBI" id="CHEBI:16845"/>
    </ligand>
</feature>
<name>DAPB_BARQU</name>
<accession>Q6FZ13</accession>
<proteinExistence type="inferred from homology"/>
<dbReference type="EC" id="1.17.1.8" evidence="1"/>
<dbReference type="EMBL" id="BX897700">
    <property type="protein sequence ID" value="CAF26457.1"/>
    <property type="molecule type" value="Genomic_DNA"/>
</dbReference>
<dbReference type="RefSeq" id="WP_011179680.1">
    <property type="nucleotide sequence ID" value="NC_005955.1"/>
</dbReference>
<dbReference type="SMR" id="Q6FZ13"/>
<dbReference type="KEGG" id="bqu:BQ09810"/>
<dbReference type="eggNOG" id="COG0289">
    <property type="taxonomic scope" value="Bacteria"/>
</dbReference>
<dbReference type="HOGENOM" id="CLU_047479_2_1_5"/>
<dbReference type="OrthoDB" id="9790352at2"/>
<dbReference type="UniPathway" id="UPA00034">
    <property type="reaction ID" value="UER00018"/>
</dbReference>
<dbReference type="Proteomes" id="UP000000597">
    <property type="component" value="Chromosome"/>
</dbReference>
<dbReference type="GO" id="GO:0005829">
    <property type="term" value="C:cytosol"/>
    <property type="evidence" value="ECO:0007669"/>
    <property type="project" value="TreeGrafter"/>
</dbReference>
<dbReference type="GO" id="GO:0008839">
    <property type="term" value="F:4-hydroxy-tetrahydrodipicolinate reductase"/>
    <property type="evidence" value="ECO:0007669"/>
    <property type="project" value="UniProtKB-EC"/>
</dbReference>
<dbReference type="GO" id="GO:0051287">
    <property type="term" value="F:NAD binding"/>
    <property type="evidence" value="ECO:0007669"/>
    <property type="project" value="UniProtKB-UniRule"/>
</dbReference>
<dbReference type="GO" id="GO:0050661">
    <property type="term" value="F:NADP binding"/>
    <property type="evidence" value="ECO:0007669"/>
    <property type="project" value="UniProtKB-UniRule"/>
</dbReference>
<dbReference type="GO" id="GO:0016726">
    <property type="term" value="F:oxidoreductase activity, acting on CH or CH2 groups, NAD or NADP as acceptor"/>
    <property type="evidence" value="ECO:0007669"/>
    <property type="project" value="UniProtKB-UniRule"/>
</dbReference>
<dbReference type="GO" id="GO:0019877">
    <property type="term" value="P:diaminopimelate biosynthetic process"/>
    <property type="evidence" value="ECO:0007669"/>
    <property type="project" value="UniProtKB-UniRule"/>
</dbReference>
<dbReference type="GO" id="GO:0009089">
    <property type="term" value="P:lysine biosynthetic process via diaminopimelate"/>
    <property type="evidence" value="ECO:0007669"/>
    <property type="project" value="UniProtKB-UniRule"/>
</dbReference>
<dbReference type="CDD" id="cd02274">
    <property type="entry name" value="DHDPR_N"/>
    <property type="match status" value="1"/>
</dbReference>
<dbReference type="FunFam" id="3.30.360.10:FF:000004">
    <property type="entry name" value="4-hydroxy-tetrahydrodipicolinate reductase"/>
    <property type="match status" value="1"/>
</dbReference>
<dbReference type="Gene3D" id="3.30.360.10">
    <property type="entry name" value="Dihydrodipicolinate Reductase, domain 2"/>
    <property type="match status" value="1"/>
</dbReference>
<dbReference type="Gene3D" id="3.40.50.720">
    <property type="entry name" value="NAD(P)-binding Rossmann-like Domain"/>
    <property type="match status" value="1"/>
</dbReference>
<dbReference type="HAMAP" id="MF_00102">
    <property type="entry name" value="DapB"/>
    <property type="match status" value="1"/>
</dbReference>
<dbReference type="InterPro" id="IPR022663">
    <property type="entry name" value="DapB_C"/>
</dbReference>
<dbReference type="InterPro" id="IPR000846">
    <property type="entry name" value="DapB_N"/>
</dbReference>
<dbReference type="InterPro" id="IPR022664">
    <property type="entry name" value="DapB_N_CS"/>
</dbReference>
<dbReference type="InterPro" id="IPR023940">
    <property type="entry name" value="DHDPR_bac"/>
</dbReference>
<dbReference type="InterPro" id="IPR036291">
    <property type="entry name" value="NAD(P)-bd_dom_sf"/>
</dbReference>
<dbReference type="NCBIfam" id="TIGR00036">
    <property type="entry name" value="dapB"/>
    <property type="match status" value="1"/>
</dbReference>
<dbReference type="PANTHER" id="PTHR20836:SF0">
    <property type="entry name" value="4-HYDROXY-TETRAHYDRODIPICOLINATE REDUCTASE 1, CHLOROPLASTIC-RELATED"/>
    <property type="match status" value="1"/>
</dbReference>
<dbReference type="PANTHER" id="PTHR20836">
    <property type="entry name" value="DIHYDRODIPICOLINATE REDUCTASE"/>
    <property type="match status" value="1"/>
</dbReference>
<dbReference type="Pfam" id="PF05173">
    <property type="entry name" value="DapB_C"/>
    <property type="match status" value="1"/>
</dbReference>
<dbReference type="Pfam" id="PF01113">
    <property type="entry name" value="DapB_N"/>
    <property type="match status" value="1"/>
</dbReference>
<dbReference type="PIRSF" id="PIRSF000161">
    <property type="entry name" value="DHPR"/>
    <property type="match status" value="1"/>
</dbReference>
<dbReference type="SUPFAM" id="SSF55347">
    <property type="entry name" value="Glyceraldehyde-3-phosphate dehydrogenase-like, C-terminal domain"/>
    <property type="match status" value="1"/>
</dbReference>
<dbReference type="SUPFAM" id="SSF51735">
    <property type="entry name" value="NAD(P)-binding Rossmann-fold domains"/>
    <property type="match status" value="1"/>
</dbReference>
<dbReference type="PROSITE" id="PS01298">
    <property type="entry name" value="DAPB"/>
    <property type="match status" value="1"/>
</dbReference>
<evidence type="ECO:0000255" key="1">
    <source>
        <dbReference type="HAMAP-Rule" id="MF_00102"/>
    </source>
</evidence>
<evidence type="ECO:0000305" key="2"/>
<comment type="function">
    <text evidence="1">Catalyzes the conversion of 4-hydroxy-tetrahydrodipicolinate (HTPA) to tetrahydrodipicolinate.</text>
</comment>
<comment type="catalytic activity">
    <reaction evidence="1">
        <text>(S)-2,3,4,5-tetrahydrodipicolinate + NAD(+) + H2O = (2S,4S)-4-hydroxy-2,3,4,5-tetrahydrodipicolinate + NADH + H(+)</text>
        <dbReference type="Rhea" id="RHEA:35323"/>
        <dbReference type="ChEBI" id="CHEBI:15377"/>
        <dbReference type="ChEBI" id="CHEBI:15378"/>
        <dbReference type="ChEBI" id="CHEBI:16845"/>
        <dbReference type="ChEBI" id="CHEBI:57540"/>
        <dbReference type="ChEBI" id="CHEBI:57945"/>
        <dbReference type="ChEBI" id="CHEBI:67139"/>
        <dbReference type="EC" id="1.17.1.8"/>
    </reaction>
</comment>
<comment type="catalytic activity">
    <reaction evidence="1">
        <text>(S)-2,3,4,5-tetrahydrodipicolinate + NADP(+) + H2O = (2S,4S)-4-hydroxy-2,3,4,5-tetrahydrodipicolinate + NADPH + H(+)</text>
        <dbReference type="Rhea" id="RHEA:35331"/>
        <dbReference type="ChEBI" id="CHEBI:15377"/>
        <dbReference type="ChEBI" id="CHEBI:15378"/>
        <dbReference type="ChEBI" id="CHEBI:16845"/>
        <dbReference type="ChEBI" id="CHEBI:57783"/>
        <dbReference type="ChEBI" id="CHEBI:58349"/>
        <dbReference type="ChEBI" id="CHEBI:67139"/>
        <dbReference type="EC" id="1.17.1.8"/>
    </reaction>
</comment>
<comment type="pathway">
    <text evidence="1">Amino-acid biosynthesis; L-lysine biosynthesis via DAP pathway; (S)-tetrahydrodipicolinate from L-aspartate: step 4/4.</text>
</comment>
<comment type="subcellular location">
    <subcellularLocation>
        <location evidence="1">Cytoplasm</location>
    </subcellularLocation>
</comment>
<comment type="similarity">
    <text evidence="1">Belongs to the DapB family.</text>
</comment>
<comment type="caution">
    <text evidence="2">Was originally thought to be a dihydrodipicolinate reductase (DHDPR), catalyzing the conversion of dihydrodipicolinate to tetrahydrodipicolinate. However, it was shown in E.coli that the substrate of the enzymatic reaction is not dihydrodipicolinate (DHDP) but in fact (2S,4S)-4-hydroxy-2,3,4,5-tetrahydrodipicolinic acid (HTPA), the product released by the DapA-catalyzed reaction.</text>
</comment>